<name>DU4L6_HUMAN</name>
<gene>
    <name type="primary">DUX4L6</name>
</gene>
<keyword id="KW-0238">DNA-binding</keyword>
<keyword id="KW-0371">Homeobox</keyword>
<keyword id="KW-0539">Nucleus</keyword>
<keyword id="KW-1185">Reference proteome</keyword>
<keyword id="KW-0677">Repeat</keyword>
<keyword id="KW-0804">Transcription</keyword>
<keyword id="KW-0805">Transcription regulation</keyword>
<organism>
    <name type="scientific">Homo sapiens</name>
    <name type="common">Human</name>
    <dbReference type="NCBI Taxonomy" id="9606"/>
    <lineage>
        <taxon>Eukaryota</taxon>
        <taxon>Metazoa</taxon>
        <taxon>Chordata</taxon>
        <taxon>Craniata</taxon>
        <taxon>Vertebrata</taxon>
        <taxon>Euteleostomi</taxon>
        <taxon>Mammalia</taxon>
        <taxon>Eutheria</taxon>
        <taxon>Euarchontoglires</taxon>
        <taxon>Primates</taxon>
        <taxon>Haplorrhini</taxon>
        <taxon>Catarrhini</taxon>
        <taxon>Hominidae</taxon>
        <taxon>Homo</taxon>
    </lineage>
</organism>
<sequence length="424" mass="44926">MALPTPSDSTLPAEARGRGRRRRLVWTPSQSEALRACFERNPYPGIATRERLAQAIGIPEPRVQIWFQNERSRQLRQHRRESRPWPGRRGPPEGRRKRTAVTGSQTALLLRAFEKDRFPGIAAREELARETGLPESRIQIWFQNRRARHPGQGGRAPAQAGGLCSAAPGGGHPAPSWVAFAHTGAWGTGLPAPHVPCAPGALPQGAFVSQAARAAPALQPSQAAPAEGVSQPAPARGDFAYAAPAPPDGALSHPQAPRWPPHPGKSREDRDPQRDGLPGPCAVAQPGPAQAGPQGQGVLAPPTSQGSPWWGWGRGPQVAGAAWEPQAGAAPPPQPAPPDASASARQGQMQGIPAPSQALQEPAPWSALPCGLLLDELLASPEFLQQAQPLLETEAPGELEASEEAASLEAPLSEEEYRALLEEL</sequence>
<proteinExistence type="inferred from homology"/>
<feature type="chain" id="PRO_0000405254" description="Double homeobox protein 4-like protein 6">
    <location>
        <begin position="1"/>
        <end position="424"/>
    </location>
</feature>
<feature type="DNA-binding region" description="Homeobox 1" evidence="2">
    <location>
        <begin position="19"/>
        <end position="78"/>
    </location>
</feature>
<feature type="DNA-binding region" description="Homeobox 2" evidence="2">
    <location>
        <begin position="94"/>
        <end position="153"/>
    </location>
</feature>
<feature type="region of interest" description="Disordered" evidence="3">
    <location>
        <begin position="1"/>
        <end position="24"/>
    </location>
</feature>
<feature type="region of interest" description="Disordered" evidence="3">
    <location>
        <begin position="72"/>
        <end position="102"/>
    </location>
</feature>
<feature type="region of interest" description="Disordered" evidence="3">
    <location>
        <begin position="148"/>
        <end position="167"/>
    </location>
</feature>
<feature type="region of interest" description="Disordered" evidence="3">
    <location>
        <begin position="218"/>
        <end position="362"/>
    </location>
</feature>
<feature type="region of interest" description="Disordered" evidence="3">
    <location>
        <begin position="388"/>
        <end position="414"/>
    </location>
</feature>
<feature type="compositionally biased region" description="Polar residues" evidence="3">
    <location>
        <begin position="1"/>
        <end position="10"/>
    </location>
</feature>
<feature type="compositionally biased region" description="Basic and acidic residues" evidence="3">
    <location>
        <begin position="265"/>
        <end position="274"/>
    </location>
</feature>
<feature type="compositionally biased region" description="Low complexity" evidence="3">
    <location>
        <begin position="278"/>
        <end position="302"/>
    </location>
</feature>
<feature type="compositionally biased region" description="Low complexity" evidence="3">
    <location>
        <begin position="319"/>
        <end position="329"/>
    </location>
</feature>
<protein>
    <recommendedName>
        <fullName>Double homeobox protein 4-like protein 6</fullName>
    </recommendedName>
</protein>
<reference key="1">
    <citation type="journal article" date="2005" name="Nature">
        <title>Generation and annotation of the DNA sequences of human chromosomes 2 and 4.</title>
        <authorList>
            <person name="Hillier L.W."/>
            <person name="Graves T.A."/>
            <person name="Fulton R.S."/>
            <person name="Fulton L.A."/>
            <person name="Pepin K.H."/>
            <person name="Minx P."/>
            <person name="Wagner-McPherson C."/>
            <person name="Layman D."/>
            <person name="Wylie K."/>
            <person name="Sekhon M."/>
            <person name="Becker M.C."/>
            <person name="Fewell G.A."/>
            <person name="Delehaunty K.D."/>
            <person name="Miner T.L."/>
            <person name="Nash W.E."/>
            <person name="Kremitzki C."/>
            <person name="Oddy L."/>
            <person name="Du H."/>
            <person name="Sun H."/>
            <person name="Bradshaw-Cordum H."/>
            <person name="Ali J."/>
            <person name="Carter J."/>
            <person name="Cordes M."/>
            <person name="Harris A."/>
            <person name="Isak A."/>
            <person name="van Brunt A."/>
            <person name="Nguyen C."/>
            <person name="Du F."/>
            <person name="Courtney L."/>
            <person name="Kalicki J."/>
            <person name="Ozersky P."/>
            <person name="Abbott S."/>
            <person name="Armstrong J."/>
            <person name="Belter E.A."/>
            <person name="Caruso L."/>
            <person name="Cedroni M."/>
            <person name="Cotton M."/>
            <person name="Davidson T."/>
            <person name="Desai A."/>
            <person name="Elliott G."/>
            <person name="Erb T."/>
            <person name="Fronick C."/>
            <person name="Gaige T."/>
            <person name="Haakenson W."/>
            <person name="Haglund K."/>
            <person name="Holmes A."/>
            <person name="Harkins R."/>
            <person name="Kim K."/>
            <person name="Kruchowski S.S."/>
            <person name="Strong C.M."/>
            <person name="Grewal N."/>
            <person name="Goyea E."/>
            <person name="Hou S."/>
            <person name="Levy A."/>
            <person name="Martinka S."/>
            <person name="Mead K."/>
            <person name="McLellan M.D."/>
            <person name="Meyer R."/>
            <person name="Randall-Maher J."/>
            <person name="Tomlinson C."/>
            <person name="Dauphin-Kohlberg S."/>
            <person name="Kozlowicz-Reilly A."/>
            <person name="Shah N."/>
            <person name="Swearengen-Shahid S."/>
            <person name="Snider J."/>
            <person name="Strong J.T."/>
            <person name="Thompson J."/>
            <person name="Yoakum M."/>
            <person name="Leonard S."/>
            <person name="Pearman C."/>
            <person name="Trani L."/>
            <person name="Radionenko M."/>
            <person name="Waligorski J.E."/>
            <person name="Wang C."/>
            <person name="Rock S.M."/>
            <person name="Tin-Wollam A.-M."/>
            <person name="Maupin R."/>
            <person name="Latreille P."/>
            <person name="Wendl M.C."/>
            <person name="Yang S.-P."/>
            <person name="Pohl C."/>
            <person name="Wallis J.W."/>
            <person name="Spieth J."/>
            <person name="Bieri T.A."/>
            <person name="Berkowicz N."/>
            <person name="Nelson J.O."/>
            <person name="Osborne J."/>
            <person name="Ding L."/>
            <person name="Meyer R."/>
            <person name="Sabo A."/>
            <person name="Shotland Y."/>
            <person name="Sinha P."/>
            <person name="Wohldmann P.E."/>
            <person name="Cook L.L."/>
            <person name="Hickenbotham M.T."/>
            <person name="Eldred J."/>
            <person name="Williams D."/>
            <person name="Jones T.A."/>
            <person name="She X."/>
            <person name="Ciccarelli F.D."/>
            <person name="Izaurralde E."/>
            <person name="Taylor J."/>
            <person name="Schmutz J."/>
            <person name="Myers R.M."/>
            <person name="Cox D.R."/>
            <person name="Huang X."/>
            <person name="McPherson J.D."/>
            <person name="Mardis E.R."/>
            <person name="Clifton S.W."/>
            <person name="Warren W.C."/>
            <person name="Chinwalla A.T."/>
            <person name="Eddy S.R."/>
            <person name="Marra M.A."/>
            <person name="Ovcharenko I."/>
            <person name="Furey T.S."/>
            <person name="Miller W."/>
            <person name="Eichler E.E."/>
            <person name="Bork P."/>
            <person name="Suyama M."/>
            <person name="Torrents D."/>
            <person name="Waterston R.H."/>
            <person name="Wilson R.K."/>
        </authorList>
    </citation>
    <scope>NUCLEOTIDE SEQUENCE [LARGE SCALE GENOMIC DNA]</scope>
</reference>
<comment type="function">
    <text evidence="1">May be involved in transcriptional regulation.</text>
</comment>
<comment type="subcellular location">
    <subcellularLocation>
        <location evidence="2">Nucleus</location>
    </subcellularLocation>
</comment>
<dbReference type="EMBL" id="AC126281">
    <property type="status" value="NOT_ANNOTATED_CDS"/>
    <property type="molecule type" value="Genomic_DNA"/>
</dbReference>
<dbReference type="SMR" id="P0CJ89"/>
<dbReference type="FunCoup" id="P0CJ89">
    <property type="interactions" value="16"/>
</dbReference>
<dbReference type="IntAct" id="P0CJ89">
    <property type="interactions" value="1"/>
</dbReference>
<dbReference type="GlyGen" id="P0CJ89">
    <property type="glycosylation" value="1 site"/>
</dbReference>
<dbReference type="iPTMnet" id="P0CJ89"/>
<dbReference type="PhosphoSitePlus" id="P0CJ89"/>
<dbReference type="BioMuta" id="HGNC:37265"/>
<dbReference type="DMDM" id="325530036"/>
<dbReference type="MassIVE" id="P0CJ89"/>
<dbReference type="AGR" id="HGNC:37265"/>
<dbReference type="GeneCards" id="DUX4L6"/>
<dbReference type="HGNC" id="HGNC:37265">
    <property type="gene designation" value="DUX4L6"/>
</dbReference>
<dbReference type="neXtProt" id="NX_P0CJ89"/>
<dbReference type="InParanoid" id="P0CJ89"/>
<dbReference type="PAN-GO" id="P0CJ89">
    <property type="GO annotations" value="4 GO annotations based on evolutionary models"/>
</dbReference>
<dbReference type="PhylomeDB" id="P0CJ89"/>
<dbReference type="ChiTaRS" id="DUX4L6">
    <property type="organism name" value="human"/>
</dbReference>
<dbReference type="Pharos" id="P0CJ89">
    <property type="development level" value="Tdark"/>
</dbReference>
<dbReference type="PRO" id="PR:P0CJ89"/>
<dbReference type="Proteomes" id="UP000005640">
    <property type="component" value="Unplaced"/>
</dbReference>
<dbReference type="RNAct" id="P0CJ89">
    <property type="molecule type" value="protein"/>
</dbReference>
<dbReference type="GO" id="GO:0000785">
    <property type="term" value="C:chromatin"/>
    <property type="evidence" value="ECO:0000247"/>
    <property type="project" value="NTNU_SB"/>
</dbReference>
<dbReference type="GO" id="GO:0005634">
    <property type="term" value="C:nucleus"/>
    <property type="evidence" value="ECO:0000318"/>
    <property type="project" value="GO_Central"/>
</dbReference>
<dbReference type="GO" id="GO:0000981">
    <property type="term" value="F:DNA-binding transcription factor activity, RNA polymerase II-specific"/>
    <property type="evidence" value="ECO:0000247"/>
    <property type="project" value="NTNU_SB"/>
</dbReference>
<dbReference type="GO" id="GO:0000977">
    <property type="term" value="F:RNA polymerase II transcription regulatory region sequence-specific DNA binding"/>
    <property type="evidence" value="ECO:0000318"/>
    <property type="project" value="GO_Central"/>
</dbReference>
<dbReference type="GO" id="GO:0006357">
    <property type="term" value="P:regulation of transcription by RNA polymerase II"/>
    <property type="evidence" value="ECO:0000318"/>
    <property type="project" value="GO_Central"/>
</dbReference>
<dbReference type="CDD" id="cd00086">
    <property type="entry name" value="homeodomain"/>
    <property type="match status" value="2"/>
</dbReference>
<dbReference type="FunFam" id="1.10.10.60:FF:000325">
    <property type="entry name" value="Double homeobox protein 4"/>
    <property type="match status" value="1"/>
</dbReference>
<dbReference type="FunFam" id="1.10.10.60:FF:000354">
    <property type="entry name" value="Double homeobox protein 4"/>
    <property type="match status" value="1"/>
</dbReference>
<dbReference type="Gene3D" id="1.10.10.60">
    <property type="entry name" value="Homeodomain-like"/>
    <property type="match status" value="2"/>
</dbReference>
<dbReference type="InterPro" id="IPR001356">
    <property type="entry name" value="HD"/>
</dbReference>
<dbReference type="InterPro" id="IPR051306">
    <property type="entry name" value="Homeobox_regulator"/>
</dbReference>
<dbReference type="InterPro" id="IPR009057">
    <property type="entry name" value="Homeodomain-like_sf"/>
</dbReference>
<dbReference type="InterPro" id="IPR000047">
    <property type="entry name" value="HTH_motif"/>
</dbReference>
<dbReference type="PANTHER" id="PTHR46123:SF3">
    <property type="entry name" value="DOUBLE HOMEOBOX PROTEIN 1-RELATED"/>
    <property type="match status" value="1"/>
</dbReference>
<dbReference type="PANTHER" id="PTHR46123">
    <property type="entry name" value="MIX-TYPE HOMEOBOX GENE 1-RELATED"/>
    <property type="match status" value="1"/>
</dbReference>
<dbReference type="Pfam" id="PF00046">
    <property type="entry name" value="Homeodomain"/>
    <property type="match status" value="2"/>
</dbReference>
<dbReference type="PRINTS" id="PR00031">
    <property type="entry name" value="HTHREPRESSR"/>
</dbReference>
<dbReference type="SMART" id="SM00389">
    <property type="entry name" value="HOX"/>
    <property type="match status" value="2"/>
</dbReference>
<dbReference type="SUPFAM" id="SSF46689">
    <property type="entry name" value="Homeodomain-like"/>
    <property type="match status" value="2"/>
</dbReference>
<dbReference type="PROSITE" id="PS50071">
    <property type="entry name" value="HOMEOBOX_2"/>
    <property type="match status" value="2"/>
</dbReference>
<evidence type="ECO:0000250" key="1"/>
<evidence type="ECO:0000255" key="2">
    <source>
        <dbReference type="PROSITE-ProRule" id="PRU00108"/>
    </source>
</evidence>
<evidence type="ECO:0000256" key="3">
    <source>
        <dbReference type="SAM" id="MobiDB-lite"/>
    </source>
</evidence>
<accession>P0CJ89</accession>